<accession>P40623</accession>
<gene>
    <name type="primary">HMG1B</name>
</gene>
<keyword id="KW-0158">Chromosome</keyword>
<keyword id="KW-0238">DNA-binding</keyword>
<keyword id="KW-0539">Nucleus</keyword>
<dbReference type="EMBL" id="M93254">
    <property type="protein sequence ID" value="AAA21713.1"/>
    <property type="molecule type" value="mRNA"/>
</dbReference>
<dbReference type="PIR" id="B43436">
    <property type="entry name" value="B43436"/>
</dbReference>
<dbReference type="SMR" id="P40623"/>
<dbReference type="GO" id="GO:0005694">
    <property type="term" value="C:chromosome"/>
    <property type="evidence" value="ECO:0007669"/>
    <property type="project" value="UniProtKB-SubCell"/>
</dbReference>
<dbReference type="GO" id="GO:0005634">
    <property type="term" value="C:nucleus"/>
    <property type="evidence" value="ECO:0007669"/>
    <property type="project" value="UniProtKB-SubCell"/>
</dbReference>
<dbReference type="GO" id="GO:0003677">
    <property type="term" value="F:DNA binding"/>
    <property type="evidence" value="ECO:0007669"/>
    <property type="project" value="UniProtKB-KW"/>
</dbReference>
<dbReference type="GO" id="GO:0006357">
    <property type="term" value="P:regulation of transcription by RNA polymerase II"/>
    <property type="evidence" value="ECO:0007669"/>
    <property type="project" value="TreeGrafter"/>
</dbReference>
<dbReference type="CDD" id="cd21994">
    <property type="entry name" value="HMG-box_SSRP1-like"/>
    <property type="match status" value="1"/>
</dbReference>
<dbReference type="FunFam" id="1.10.30.10:FF:000036">
    <property type="entry name" value="high mobility group protein D"/>
    <property type="match status" value="1"/>
</dbReference>
<dbReference type="Gene3D" id="1.10.30.10">
    <property type="entry name" value="High mobility group box domain"/>
    <property type="match status" value="1"/>
</dbReference>
<dbReference type="InterPro" id="IPR009071">
    <property type="entry name" value="HMG_box_dom"/>
</dbReference>
<dbReference type="InterPro" id="IPR036910">
    <property type="entry name" value="HMG_box_dom_sf"/>
</dbReference>
<dbReference type="InterPro" id="IPR050342">
    <property type="entry name" value="HMGB"/>
</dbReference>
<dbReference type="PANTHER" id="PTHR48112:SF20">
    <property type="entry name" value="HIGH MOBILITY GROUP PROTEIN D-RELATED"/>
    <property type="match status" value="1"/>
</dbReference>
<dbReference type="PANTHER" id="PTHR48112">
    <property type="entry name" value="HIGH MOBILITY GROUP PROTEIN DSP1"/>
    <property type="match status" value="1"/>
</dbReference>
<dbReference type="Pfam" id="PF00505">
    <property type="entry name" value="HMG_box"/>
    <property type="match status" value="1"/>
</dbReference>
<dbReference type="SMART" id="SM00398">
    <property type="entry name" value="HMG"/>
    <property type="match status" value="1"/>
</dbReference>
<dbReference type="SUPFAM" id="SSF47095">
    <property type="entry name" value="HMG-box"/>
    <property type="match status" value="1"/>
</dbReference>
<dbReference type="PROSITE" id="PS50118">
    <property type="entry name" value="HMG_BOX_2"/>
    <property type="match status" value="1"/>
</dbReference>
<evidence type="ECO:0000255" key="1">
    <source>
        <dbReference type="PROSITE-ProRule" id="PRU00267"/>
    </source>
</evidence>
<evidence type="ECO:0000256" key="2">
    <source>
        <dbReference type="SAM" id="MobiDB-lite"/>
    </source>
</evidence>
<evidence type="ECO:0000305" key="3"/>
<name>HMG1B_CHITE</name>
<organism>
    <name type="scientific">Chironomus tentans</name>
    <name type="common">Midge</name>
    <name type="synonym">Camptochironomus tentans</name>
    <dbReference type="NCBI Taxonomy" id="7153"/>
    <lineage>
        <taxon>Eukaryota</taxon>
        <taxon>Metazoa</taxon>
        <taxon>Ecdysozoa</taxon>
        <taxon>Arthropoda</taxon>
        <taxon>Hexapoda</taxon>
        <taxon>Insecta</taxon>
        <taxon>Pterygota</taxon>
        <taxon>Neoptera</taxon>
        <taxon>Endopterygota</taxon>
        <taxon>Diptera</taxon>
        <taxon>Nematocera</taxon>
        <taxon>Chironomoidea</taxon>
        <taxon>Chironomidae</taxon>
        <taxon>Chironominae</taxon>
        <taxon>Chironomus</taxon>
    </lineage>
</organism>
<proteinExistence type="inferred from homology"/>
<sequence>MADKPKRPLSAYMLWLNSARESIKRENPDFKVTEVAKKGGELWRGLKDKSEWEAKAATAKQNYIRALQEYERNGGGGDDKGKKRKGAAPKKGAGKKSKKGAHSDDDGDSE</sequence>
<protein>
    <recommendedName>
        <fullName>Mobility group protein 1B</fullName>
    </recommendedName>
</protein>
<comment type="function">
    <text>Found in condensed chromomeres. Binds preferentially to AT-rich DNA.</text>
</comment>
<comment type="subcellular location">
    <subcellularLocation>
        <location>Nucleus</location>
    </subcellularLocation>
    <subcellularLocation>
        <location>Chromosome</location>
    </subcellularLocation>
</comment>
<comment type="similarity">
    <text evidence="3">Belongs to the HMGB family.</text>
</comment>
<feature type="chain" id="PRO_0000048551" description="Mobility group protein 1B">
    <location>
        <begin position="1"/>
        <end position="110"/>
    </location>
</feature>
<feature type="DNA-binding region" description="HMG box" evidence="1">
    <location>
        <begin position="5"/>
        <end position="71"/>
    </location>
</feature>
<feature type="region of interest" description="Disordered" evidence="2">
    <location>
        <begin position="71"/>
        <end position="110"/>
    </location>
</feature>
<feature type="compositionally biased region" description="Basic and acidic residues" evidence="2">
    <location>
        <begin position="71"/>
        <end position="81"/>
    </location>
</feature>
<feature type="compositionally biased region" description="Basic residues" evidence="2">
    <location>
        <begin position="82"/>
        <end position="100"/>
    </location>
</feature>
<reference key="1">
    <citation type="journal article" date="1992" name="J. Biol. Chem.">
        <title>Insect proteins homologous to mammalian high mobility group protein 1. Characterization and DNA-binding properties.</title>
        <authorList>
            <person name="Wisniewski J.R."/>
            <person name="Schulze E."/>
        </authorList>
    </citation>
    <scope>NUCLEOTIDE SEQUENCE [MRNA]</scope>
    <source>
        <tissue>Embryonic epithelium</tissue>
    </source>
</reference>